<reference key="1">
    <citation type="journal article" date="1996" name="J. Biol. Chem.">
        <title>A new K+ channel beta subunit to specifically enhance Kv2.2 (CDRK) expression.</title>
        <authorList>
            <person name="Fink M."/>
            <person name="Duprat F."/>
            <person name="Lesage F."/>
            <person name="Heurteaux C."/>
            <person name="Romey G."/>
            <person name="Barhanin J."/>
            <person name="Lazdunski M."/>
        </authorList>
    </citation>
    <scope>NUCLEOTIDE SEQUENCE [MRNA]</scope>
    <scope>FUNCTION</scope>
    <scope>TISSUE SPECIFICITY</scope>
    <scope>INTERACTION WITH KCNA5 AND KCNB2</scope>
    <source>
        <tissue>Brain</tissue>
    </source>
</reference>
<accession>P97382</accession>
<organism>
    <name type="scientific">Mus musculus</name>
    <name type="common">Mouse</name>
    <dbReference type="NCBI Taxonomy" id="10090"/>
    <lineage>
        <taxon>Eukaryota</taxon>
        <taxon>Metazoa</taxon>
        <taxon>Chordata</taxon>
        <taxon>Craniata</taxon>
        <taxon>Vertebrata</taxon>
        <taxon>Euteleostomi</taxon>
        <taxon>Mammalia</taxon>
        <taxon>Eutheria</taxon>
        <taxon>Euarchontoglires</taxon>
        <taxon>Glires</taxon>
        <taxon>Rodentia</taxon>
        <taxon>Myomorpha</taxon>
        <taxon>Muroidea</taxon>
        <taxon>Muridae</taxon>
        <taxon>Murinae</taxon>
        <taxon>Mus</taxon>
        <taxon>Mus</taxon>
    </lineage>
</organism>
<proteinExistence type="evidence at protein level"/>
<feature type="chain" id="PRO_0000148751" description="Voltage-gated potassium channel subunit beta-3">
    <location>
        <begin position="1"/>
        <end position="249"/>
    </location>
</feature>
<feature type="binding site" evidence="1">
    <location>
        <position position="44"/>
    </location>
    <ligand>
        <name>NADP(+)</name>
        <dbReference type="ChEBI" id="CHEBI:58349"/>
    </ligand>
</feature>
<feature type="binding site" evidence="1">
    <location>
        <position position="74"/>
    </location>
    <ligand>
        <name>NADP(+)</name>
        <dbReference type="ChEBI" id="CHEBI:58349"/>
    </ligand>
</feature>
<feature type="binding site" evidence="1">
    <location>
        <position position="75"/>
    </location>
    <ligand>
        <name>NADP(+)</name>
        <dbReference type="ChEBI" id="CHEBI:58349"/>
    </ligand>
</feature>
<feature type="binding site" evidence="1">
    <location>
        <position position="100"/>
    </location>
    <ligand>
        <name>NADP(+)</name>
        <dbReference type="ChEBI" id="CHEBI:58349"/>
    </ligand>
</feature>
<feature type="binding site" evidence="1">
    <location>
        <position position="129"/>
    </location>
    <ligand>
        <name>NADP(+)</name>
        <dbReference type="ChEBI" id="CHEBI:58349"/>
    </ligand>
</feature>
<feature type="binding site" evidence="1">
    <location>
        <position position="130"/>
    </location>
    <ligand>
        <name>NADP(+)</name>
        <dbReference type="ChEBI" id="CHEBI:58349"/>
    </ligand>
</feature>
<feature type="binding site" evidence="1">
    <location>
        <position position="131"/>
    </location>
    <ligand>
        <name>NADP(+)</name>
        <dbReference type="ChEBI" id="CHEBI:58349"/>
    </ligand>
</feature>
<feature type="binding site" evidence="1">
    <location>
        <position position="132"/>
    </location>
    <ligand>
        <name>NADP(+)</name>
        <dbReference type="ChEBI" id="CHEBI:58349"/>
    </ligand>
</feature>
<feature type="binding site" evidence="1">
    <location>
        <position position="133"/>
    </location>
    <ligand>
        <name>NADP(+)</name>
        <dbReference type="ChEBI" id="CHEBI:58349"/>
    </ligand>
</feature>
<feature type="binding site" evidence="1">
    <location>
        <position position="134"/>
    </location>
    <ligand>
        <name>NADP(+)</name>
        <dbReference type="ChEBI" id="CHEBI:58349"/>
    </ligand>
</feature>
<feature type="binding site" evidence="1">
    <location>
        <position position="140"/>
    </location>
    <ligand>
        <name>NADP(+)</name>
        <dbReference type="ChEBI" id="CHEBI:58349"/>
    </ligand>
</feature>
<feature type="binding site" evidence="1">
    <location>
        <position position="150"/>
    </location>
    <ligand>
        <name>NADP(+)</name>
        <dbReference type="ChEBI" id="CHEBI:58349"/>
    </ligand>
</feature>
<feature type="binding site" evidence="1">
    <location>
        <position position="209"/>
    </location>
    <ligand>
        <name>NADP(+)</name>
        <dbReference type="ChEBI" id="CHEBI:58349"/>
    </ligand>
</feature>
<feature type="binding site" evidence="1">
    <location>
        <position position="211"/>
    </location>
    <ligand>
        <name>NADP(+)</name>
        <dbReference type="ChEBI" id="CHEBI:58349"/>
    </ligand>
</feature>
<feature type="binding site" evidence="1">
    <location>
        <position position="215"/>
    </location>
    <ligand>
        <name>NADP(+)</name>
        <dbReference type="ChEBI" id="CHEBI:58349"/>
    </ligand>
</feature>
<feature type="binding site" evidence="1">
    <location>
        <position position="218"/>
    </location>
    <ligand>
        <name>NADP(+)</name>
        <dbReference type="ChEBI" id="CHEBI:58349"/>
    </ligand>
</feature>
<evidence type="ECO:0000250" key="1">
    <source>
        <dbReference type="UniProtKB" id="P62483"/>
    </source>
</evidence>
<evidence type="ECO:0000250" key="2">
    <source>
        <dbReference type="UniProtKB" id="P63144"/>
    </source>
</evidence>
<evidence type="ECO:0000269" key="3">
    <source>
    </source>
</evidence>
<evidence type="ECO:0000303" key="4">
    <source>
    </source>
</evidence>
<evidence type="ECO:0000305" key="5"/>
<evidence type="ECO:0000312" key="6">
    <source>
        <dbReference type="MGI" id="MGI:1336208"/>
    </source>
</evidence>
<protein>
    <recommendedName>
        <fullName>Voltage-gated potassium channel subunit beta-3</fullName>
        <ecNumber evidence="1">1.1.1.-</ecNumber>
    </recommendedName>
    <alternativeName>
        <fullName>K(+) channel subunit beta-3</fullName>
    </alternativeName>
    <alternativeName>
        <fullName>Kv-beta-3</fullName>
    </alternativeName>
</protein>
<sequence>MSRGYGLIFSLKVVFTFLSLPHPPGLQGSLDRLQLEYVDIVFANRSDPNSPMEEIVRAMTYVINQGLALYWGTSRWSAAEIMEAYSMARQFNLIPPVCEQAENHFFQREKVEMQLPELYHKIGVGSVTWSPLACGLITSKYDGRVPDTCKATVKGYQWLKEKVQSEEGKKQQARVMDLLPTARQLGCTVGQLAIAWCLRSEGVSSVLLGVSSAEQLMEHLGSLQVLSQLTPQTVVEIDALLGNKSHSKK</sequence>
<name>KCAB3_MOUSE</name>
<comment type="function">
    <text evidence="2 3">Regulatory subunit of the voltage-gated potassium (Kv) channels composed of pore-forming and potassium-conducting alpha subunits and of regulatory beta subunit (PubMed:8824288). The beta-3/KCNAB3 subunit may mediate closure of potassium channels (By similarity). Enhances the expression of Kv2.2/KCNB2 alpha subunit-containing Kv channels but not Kv2.1/KCNB1 (PubMed:8824288). May display nicotinamide adenine dinucleotide phosphate (NADPH)-dependent aldoketoreductase activity (By similarity). The binding of oxidized and reduced NADP(H) cofactors may be required for the regulation of potassium channel activity (By similarity).</text>
</comment>
<comment type="subunit">
    <text evidence="3">Forms heteromultimeric complex with alpha subunits (PubMed:8824288). Interacts with KCNA5 and KCNB2 (PubMed:8824288).</text>
</comment>
<comment type="interaction">
    <interactant intactId="EBI-7261133">
        <id>P97382</id>
    </interactant>
    <interactant intactId="EBI-6272917">
        <id>Q9JIP4</id>
        <label>Panx1</label>
    </interactant>
    <organismsDiffer>false</organismsDiffer>
    <experiments>2</experiments>
</comment>
<comment type="subcellular location">
    <subcellularLocation>
        <location evidence="5">Cytoplasm</location>
    </subcellularLocation>
</comment>
<comment type="tissue specificity">
    <text evidence="3">Strong expression in brain, with highest levels in neocortical and allocortical regions, hippocampus, olfactory bulb and cerebellum. Also strong in kidney. Weak expression in lung, skeletal muscle and heart.</text>
</comment>
<comment type="similarity">
    <text evidence="5">Belongs to the shaker potassium channel beta subunit family.</text>
</comment>
<gene>
    <name evidence="6" type="primary">Kcnab3</name>
    <name evidence="4" type="synonym">Kvbeta4</name>
</gene>
<keyword id="KW-0963">Cytoplasm</keyword>
<keyword id="KW-0407">Ion channel</keyword>
<keyword id="KW-0406">Ion transport</keyword>
<keyword id="KW-0521">NADP</keyword>
<keyword id="KW-0560">Oxidoreductase</keyword>
<keyword id="KW-0630">Potassium</keyword>
<keyword id="KW-0633">Potassium transport</keyword>
<keyword id="KW-1185">Reference proteome</keyword>
<keyword id="KW-0813">Transport</keyword>
<keyword id="KW-0851">Voltage-gated channel</keyword>
<dbReference type="EC" id="1.1.1.-" evidence="1"/>
<dbReference type="EMBL" id="U65593">
    <property type="protein sequence ID" value="AAB37264.1"/>
    <property type="molecule type" value="mRNA"/>
</dbReference>
<dbReference type="SMR" id="P97382"/>
<dbReference type="FunCoup" id="P97382">
    <property type="interactions" value="14"/>
</dbReference>
<dbReference type="IntAct" id="P97382">
    <property type="interactions" value="1"/>
</dbReference>
<dbReference type="MINT" id="P97382"/>
<dbReference type="STRING" id="10090.ENSMUSP00000018614"/>
<dbReference type="iPTMnet" id="P97382"/>
<dbReference type="PhosphoSitePlus" id="P97382"/>
<dbReference type="PaxDb" id="10090-ENSMUSP00000018614"/>
<dbReference type="ProteomicsDB" id="301756"/>
<dbReference type="ABCD" id="P97382">
    <property type="antibodies" value="1 sequenced antibody"/>
</dbReference>
<dbReference type="UCSC" id="uc007jpt.1">
    <property type="organism name" value="mouse"/>
</dbReference>
<dbReference type="AGR" id="MGI:1336208"/>
<dbReference type="MGI" id="MGI:1336208">
    <property type="gene designation" value="Kcnab3"/>
</dbReference>
<dbReference type="eggNOG" id="KOG1575">
    <property type="taxonomic scope" value="Eukaryota"/>
</dbReference>
<dbReference type="InParanoid" id="P97382"/>
<dbReference type="Reactome" id="R-MMU-1296072">
    <property type="pathway name" value="Voltage gated Potassium channels"/>
</dbReference>
<dbReference type="PRO" id="PR:P97382"/>
<dbReference type="Proteomes" id="UP000000589">
    <property type="component" value="Unplaced"/>
</dbReference>
<dbReference type="RNAct" id="P97382">
    <property type="molecule type" value="protein"/>
</dbReference>
<dbReference type="GO" id="GO:0005737">
    <property type="term" value="C:cytoplasm"/>
    <property type="evidence" value="ECO:0007669"/>
    <property type="project" value="UniProtKB-SubCell"/>
</dbReference>
<dbReference type="GO" id="GO:0034702">
    <property type="term" value="C:monoatomic ion channel complex"/>
    <property type="evidence" value="ECO:0007669"/>
    <property type="project" value="UniProtKB-KW"/>
</dbReference>
<dbReference type="GO" id="GO:0016491">
    <property type="term" value="F:oxidoreductase activity"/>
    <property type="evidence" value="ECO:0007669"/>
    <property type="project" value="UniProtKB-KW"/>
</dbReference>
<dbReference type="GO" id="GO:0005249">
    <property type="term" value="F:voltage-gated potassium channel activity"/>
    <property type="evidence" value="ECO:0007669"/>
    <property type="project" value="InterPro"/>
</dbReference>
<dbReference type="Gene3D" id="3.20.20.100">
    <property type="entry name" value="NADP-dependent oxidoreductase domain"/>
    <property type="match status" value="1"/>
</dbReference>
<dbReference type="InterPro" id="IPR005983">
    <property type="entry name" value="K_chnl_volt-dep_bsu_KCNAB"/>
</dbReference>
<dbReference type="InterPro" id="IPR005399">
    <property type="entry name" value="K_chnl_volt-dep_bsu_KCNAB-rel"/>
</dbReference>
<dbReference type="InterPro" id="IPR005402">
    <property type="entry name" value="K_chnl_volt-dep_bsu_KCNAB3"/>
</dbReference>
<dbReference type="InterPro" id="IPR023210">
    <property type="entry name" value="NADP_OxRdtase_dom"/>
</dbReference>
<dbReference type="InterPro" id="IPR036812">
    <property type="entry name" value="NADP_OxRdtase_dom_sf"/>
</dbReference>
<dbReference type="NCBIfam" id="TIGR01293">
    <property type="entry name" value="Kv_beta"/>
    <property type="match status" value="1"/>
</dbReference>
<dbReference type="PANTHER" id="PTHR43150">
    <property type="entry name" value="HYPERKINETIC, ISOFORM M"/>
    <property type="match status" value="1"/>
</dbReference>
<dbReference type="PANTHER" id="PTHR43150:SF3">
    <property type="entry name" value="VOLTAGE-GATED POTASSIUM CHANNEL SUBUNIT BETA-3"/>
    <property type="match status" value="1"/>
</dbReference>
<dbReference type="Pfam" id="PF00248">
    <property type="entry name" value="Aldo_ket_red"/>
    <property type="match status" value="1"/>
</dbReference>
<dbReference type="PRINTS" id="PR01580">
    <property type="entry name" value="KCNAB3CHANEL"/>
</dbReference>
<dbReference type="PRINTS" id="PR01577">
    <property type="entry name" value="KCNABCHANNEL"/>
</dbReference>
<dbReference type="SUPFAM" id="SSF51430">
    <property type="entry name" value="NAD(P)-linked oxidoreductase"/>
    <property type="match status" value="1"/>
</dbReference>